<organism>
    <name type="scientific">Vaccinia virus (strain Copenhagen)</name>
    <name type="common">VACV</name>
    <dbReference type="NCBI Taxonomy" id="10249"/>
    <lineage>
        <taxon>Viruses</taxon>
        <taxon>Varidnaviria</taxon>
        <taxon>Bamfordvirae</taxon>
        <taxon>Nucleocytoviricota</taxon>
        <taxon>Pokkesviricetes</taxon>
        <taxon>Chitovirales</taxon>
        <taxon>Poxviridae</taxon>
        <taxon>Chordopoxvirinae</taxon>
        <taxon>Orthopoxvirus</taxon>
        <taxon>Vaccinia virus</taxon>
    </lineage>
</organism>
<accession>P21061</accession>
<gene>
    <name type="primary">OPG166</name>
    <name type="ORF">A38L</name>
</gene>
<organismHost>
    <name type="scientific">Homo sapiens</name>
    <name type="common">Human</name>
    <dbReference type="NCBI Taxonomy" id="9606"/>
</organismHost>
<proteinExistence type="inferred from homology"/>
<protein>
    <recommendedName>
        <fullName>Protein OPG166</fullName>
    </recommendedName>
</protein>
<dbReference type="EMBL" id="M35027">
    <property type="protein sequence ID" value="AAA48168.1"/>
    <property type="molecule type" value="Genomic_DNA"/>
</dbReference>
<dbReference type="PIR" id="D42521">
    <property type="entry name" value="D42521"/>
</dbReference>
<dbReference type="SMR" id="P21061"/>
<dbReference type="Proteomes" id="UP000008269">
    <property type="component" value="Segment"/>
</dbReference>
<dbReference type="GO" id="GO:0070062">
    <property type="term" value="C:extracellular exosome"/>
    <property type="evidence" value="ECO:0007669"/>
    <property type="project" value="TreeGrafter"/>
</dbReference>
<dbReference type="GO" id="GO:0033644">
    <property type="term" value="C:host cell membrane"/>
    <property type="evidence" value="ECO:0007669"/>
    <property type="project" value="UniProtKB-SubCell"/>
</dbReference>
<dbReference type="GO" id="GO:0005886">
    <property type="term" value="C:plasma membrane"/>
    <property type="evidence" value="ECO:0007669"/>
    <property type="project" value="InterPro"/>
</dbReference>
<dbReference type="GO" id="GO:0070053">
    <property type="term" value="F:thrombospondin receptor activity"/>
    <property type="evidence" value="ECO:0007669"/>
    <property type="project" value="InterPro"/>
</dbReference>
<dbReference type="GO" id="GO:0022409">
    <property type="term" value="P:positive regulation of cell-cell adhesion"/>
    <property type="evidence" value="ECO:0007669"/>
    <property type="project" value="InterPro"/>
</dbReference>
<dbReference type="GO" id="GO:0050729">
    <property type="term" value="P:positive regulation of inflammatory response"/>
    <property type="evidence" value="ECO:0007669"/>
    <property type="project" value="InterPro"/>
</dbReference>
<dbReference type="GO" id="GO:0050766">
    <property type="term" value="P:positive regulation of phagocytosis"/>
    <property type="evidence" value="ECO:0007669"/>
    <property type="project" value="InterPro"/>
</dbReference>
<dbReference type="Gene3D" id="2.60.40.10">
    <property type="entry name" value="Immunoglobulins"/>
    <property type="match status" value="1"/>
</dbReference>
<dbReference type="InterPro" id="IPR006704">
    <property type="entry name" value="CD47"/>
</dbReference>
<dbReference type="InterPro" id="IPR013147">
    <property type="entry name" value="CD47-like_TM"/>
</dbReference>
<dbReference type="InterPro" id="IPR013270">
    <property type="entry name" value="CD47_Vset"/>
</dbReference>
<dbReference type="InterPro" id="IPR013783">
    <property type="entry name" value="Ig-like_fold"/>
</dbReference>
<dbReference type="PANTHER" id="PTHR10613">
    <property type="entry name" value="LEUKOCYTE SURFACE ANTIGEN CD47"/>
    <property type="match status" value="1"/>
</dbReference>
<dbReference type="PANTHER" id="PTHR10613:SF0">
    <property type="entry name" value="LEUKOCYTE SURFACE ANTIGEN CD47"/>
    <property type="match status" value="1"/>
</dbReference>
<dbReference type="Pfam" id="PF04549">
    <property type="entry name" value="CD47"/>
    <property type="match status" value="1"/>
</dbReference>
<dbReference type="Pfam" id="PF08204">
    <property type="entry name" value="V-set_CD47"/>
    <property type="match status" value="1"/>
</dbReference>
<name>PG166_VACCC</name>
<feature type="chain" id="PRO_0000099324" description="Protein OPG166">
    <location>
        <begin position="1"/>
        <end position="277"/>
    </location>
</feature>
<feature type="transmembrane region" description="Helical" evidence="2">
    <location>
        <begin position="124"/>
        <end position="144"/>
    </location>
</feature>
<feature type="transmembrane region" description="Helical" evidence="2">
    <location>
        <begin position="156"/>
        <end position="176"/>
    </location>
</feature>
<feature type="transmembrane region" description="Helical" evidence="2">
    <location>
        <begin position="186"/>
        <end position="206"/>
    </location>
</feature>
<feature type="transmembrane region" description="Helical" evidence="2">
    <location>
        <begin position="219"/>
        <end position="239"/>
    </location>
</feature>
<feature type="transmembrane region" description="Helical" evidence="2">
    <location>
        <begin position="247"/>
        <end position="267"/>
    </location>
</feature>
<feature type="glycosylation site" description="N-linked (GlcNAc...) asparagine; by host" evidence="2">
    <location>
        <position position="29"/>
    </location>
</feature>
<feature type="glycosylation site" description="N-linked (GlcNAc...) asparagine; by host" evidence="2">
    <location>
        <position position="58"/>
    </location>
</feature>
<keyword id="KW-0325">Glycoprotein</keyword>
<keyword id="KW-1043">Host membrane</keyword>
<keyword id="KW-0472">Membrane</keyword>
<keyword id="KW-1185">Reference proteome</keyword>
<keyword id="KW-0812">Transmembrane</keyword>
<keyword id="KW-1133">Transmembrane helix</keyword>
<reference key="1">
    <citation type="journal article" date="1990" name="Virology">
        <title>The complete DNA sequence of vaccinia virus.</title>
        <authorList>
            <person name="Goebel S.J."/>
            <person name="Johnson G.P."/>
            <person name="Perkus M.E."/>
            <person name="Davis S.W."/>
            <person name="Winslow J.P."/>
            <person name="Paoletti E."/>
        </authorList>
    </citation>
    <scope>NUCLEOTIDE SEQUENCE [LARGE SCALE GENOMIC DNA]</scope>
</reference>
<reference key="2">
    <citation type="journal article" date="1990" name="Virology">
        <title>Appendix to 'The complete DNA sequence of vaccinia virus'.</title>
        <authorList>
            <person name="Goebel S.J."/>
            <person name="Johnson G.P."/>
            <person name="Perkus M.E."/>
            <person name="Davis S.W."/>
            <person name="Winslow J.P."/>
            <person name="Paoletti E."/>
        </authorList>
    </citation>
    <scope>NUCLEOTIDE SEQUENCE [LARGE SCALE GENOMIC DNA]</scope>
</reference>
<evidence type="ECO:0000250" key="1">
    <source>
        <dbReference type="UniProtKB" id="P24763"/>
    </source>
</evidence>
<evidence type="ECO:0000255" key="2"/>
<evidence type="ECO:0000305" key="3"/>
<sequence>MSRVRISLIYLYTLVVITTTKTIEYTACNDTIIIPCTIDNPTKYIRWKLDNHDILTYNKTSKTTILSKWHTSARLHSLSDSDVSLIIEYKDILPGTYTCEDNTGIKSTVKLVQLHTNWFNDYQTMLMFIFTGITLFLLFLEITYTSISVVFSTNLGILQVFGCVIAMIELCGAFLFYPSMFTLRHIIGLLMMTLPSIFLIITKVFSFWLLCKLSCAVHLIIYYQLAGYILTVLGLGLSLKECVDGTLLLSGLGTIMVSEHFSLLFLVCFPSTQRDYY</sequence>
<comment type="function">
    <text evidence="1">Promotes, when overexpressed, the influx of extracellular Ca(2+), leading to membrane permeability and host cell necrosis.</text>
</comment>
<comment type="subcellular location">
    <subcellularLocation>
        <location evidence="1">Host membrane</location>
        <topology evidence="1">Multi-pass membrane protein</topology>
    </subcellularLocation>
</comment>
<comment type="similarity">
    <text evidence="3">Belongs to the orthopoxvirus OPG166 protein family.</text>
</comment>